<sequence>MHCRIPDTQDTHRLGGIGMTSQRTRNRLIRRLQANGIRDTRVLETMAREPRHLFVDEALAHRAYEDTALPLGHGQTLSQPWIVARMTELVLTARPRRVLEVGTGSGYQTLILARLVEAVWSIERIGALHQRAAARLAMLGADNVRLRHEDGGHGWPQAAPYDVILLTACASVLPPELLAQLADGGELIAPLEDDAGRQWLTRVRRCGITFERTRLERVRFVPLLEGVIQ</sequence>
<name>PIMT_CHRSD</name>
<comment type="function">
    <text evidence="1">Catalyzes the methyl esterification of L-isoaspartyl residues in peptides and proteins that result from spontaneous decomposition of normal L-aspartyl and L-asparaginyl residues. It plays a role in the repair and/or degradation of damaged proteins.</text>
</comment>
<comment type="catalytic activity">
    <reaction evidence="1">
        <text>[protein]-L-isoaspartate + S-adenosyl-L-methionine = [protein]-L-isoaspartate alpha-methyl ester + S-adenosyl-L-homocysteine</text>
        <dbReference type="Rhea" id="RHEA:12705"/>
        <dbReference type="Rhea" id="RHEA-COMP:12143"/>
        <dbReference type="Rhea" id="RHEA-COMP:12144"/>
        <dbReference type="ChEBI" id="CHEBI:57856"/>
        <dbReference type="ChEBI" id="CHEBI:59789"/>
        <dbReference type="ChEBI" id="CHEBI:90596"/>
        <dbReference type="ChEBI" id="CHEBI:90598"/>
        <dbReference type="EC" id="2.1.1.77"/>
    </reaction>
</comment>
<comment type="subcellular location">
    <subcellularLocation>
        <location evidence="1">Cytoplasm</location>
    </subcellularLocation>
</comment>
<comment type="similarity">
    <text evidence="1">Belongs to the methyltransferase superfamily. L-isoaspartyl/D-aspartyl protein methyltransferase family.</text>
</comment>
<accession>Q1QU77</accession>
<evidence type="ECO:0000255" key="1">
    <source>
        <dbReference type="HAMAP-Rule" id="MF_00090"/>
    </source>
</evidence>
<gene>
    <name evidence="1" type="primary">pcm</name>
    <name type="ordered locus">Csal_2634</name>
</gene>
<reference key="1">
    <citation type="journal article" date="2011" name="Stand. Genomic Sci.">
        <title>Complete genome sequence of the halophilic and highly halotolerant Chromohalobacter salexigens type strain (1H11(T)).</title>
        <authorList>
            <person name="Copeland A."/>
            <person name="O'Connor K."/>
            <person name="Lucas S."/>
            <person name="Lapidus A."/>
            <person name="Berry K.W."/>
            <person name="Detter J.C."/>
            <person name="Del Rio T.G."/>
            <person name="Hammon N."/>
            <person name="Dalin E."/>
            <person name="Tice H."/>
            <person name="Pitluck S."/>
            <person name="Bruce D."/>
            <person name="Goodwin L."/>
            <person name="Han C."/>
            <person name="Tapia R."/>
            <person name="Saunders E."/>
            <person name="Schmutz J."/>
            <person name="Brettin T."/>
            <person name="Larimer F."/>
            <person name="Land M."/>
            <person name="Hauser L."/>
            <person name="Vargas C."/>
            <person name="Nieto J.J."/>
            <person name="Kyrpides N.C."/>
            <person name="Ivanova N."/>
            <person name="Goker M."/>
            <person name="Klenk H.P."/>
            <person name="Csonka L.N."/>
            <person name="Woyke T."/>
        </authorList>
    </citation>
    <scope>NUCLEOTIDE SEQUENCE [LARGE SCALE GENOMIC DNA]</scope>
    <source>
        <strain>ATCC BAA-138 / DSM 3043 / CIP 106854 / NCIMB 13768 / 1H11</strain>
    </source>
</reference>
<feature type="chain" id="PRO_0000351847" description="Protein-L-isoaspartate O-methyltransferase">
    <location>
        <begin position="1"/>
        <end position="229"/>
    </location>
</feature>
<feature type="active site" evidence="1">
    <location>
        <position position="78"/>
    </location>
</feature>
<proteinExistence type="inferred from homology"/>
<dbReference type="EC" id="2.1.1.77" evidence="1"/>
<dbReference type="EMBL" id="CP000285">
    <property type="protein sequence ID" value="ABE59981.1"/>
    <property type="molecule type" value="Genomic_DNA"/>
</dbReference>
<dbReference type="RefSeq" id="WP_011507927.1">
    <property type="nucleotide sequence ID" value="NC_007963.1"/>
</dbReference>
<dbReference type="SMR" id="Q1QU77"/>
<dbReference type="STRING" id="290398.Csal_2634"/>
<dbReference type="GeneID" id="95335332"/>
<dbReference type="KEGG" id="csa:Csal_2634"/>
<dbReference type="eggNOG" id="COG2518">
    <property type="taxonomic scope" value="Bacteria"/>
</dbReference>
<dbReference type="HOGENOM" id="CLU_055432_2_0_6"/>
<dbReference type="OrthoDB" id="9810066at2"/>
<dbReference type="Proteomes" id="UP000000239">
    <property type="component" value="Chromosome"/>
</dbReference>
<dbReference type="GO" id="GO:0005737">
    <property type="term" value="C:cytoplasm"/>
    <property type="evidence" value="ECO:0007669"/>
    <property type="project" value="UniProtKB-SubCell"/>
</dbReference>
<dbReference type="GO" id="GO:0004719">
    <property type="term" value="F:protein-L-isoaspartate (D-aspartate) O-methyltransferase activity"/>
    <property type="evidence" value="ECO:0007669"/>
    <property type="project" value="UniProtKB-UniRule"/>
</dbReference>
<dbReference type="GO" id="GO:0032259">
    <property type="term" value="P:methylation"/>
    <property type="evidence" value="ECO:0007669"/>
    <property type="project" value="UniProtKB-KW"/>
</dbReference>
<dbReference type="GO" id="GO:0036211">
    <property type="term" value="P:protein modification process"/>
    <property type="evidence" value="ECO:0007669"/>
    <property type="project" value="UniProtKB-UniRule"/>
</dbReference>
<dbReference type="GO" id="GO:0030091">
    <property type="term" value="P:protein repair"/>
    <property type="evidence" value="ECO:0007669"/>
    <property type="project" value="UniProtKB-UniRule"/>
</dbReference>
<dbReference type="CDD" id="cd02440">
    <property type="entry name" value="AdoMet_MTases"/>
    <property type="match status" value="1"/>
</dbReference>
<dbReference type="FunFam" id="3.40.50.150:FF:000010">
    <property type="entry name" value="Protein-L-isoaspartate O-methyltransferase"/>
    <property type="match status" value="1"/>
</dbReference>
<dbReference type="Gene3D" id="3.40.50.150">
    <property type="entry name" value="Vaccinia Virus protein VP39"/>
    <property type="match status" value="1"/>
</dbReference>
<dbReference type="HAMAP" id="MF_00090">
    <property type="entry name" value="PIMT"/>
    <property type="match status" value="1"/>
</dbReference>
<dbReference type="InterPro" id="IPR000682">
    <property type="entry name" value="PCMT"/>
</dbReference>
<dbReference type="InterPro" id="IPR029063">
    <property type="entry name" value="SAM-dependent_MTases_sf"/>
</dbReference>
<dbReference type="NCBIfam" id="TIGR00080">
    <property type="entry name" value="pimt"/>
    <property type="match status" value="1"/>
</dbReference>
<dbReference type="NCBIfam" id="NF001453">
    <property type="entry name" value="PRK00312.1"/>
    <property type="match status" value="1"/>
</dbReference>
<dbReference type="PANTHER" id="PTHR11579">
    <property type="entry name" value="PROTEIN-L-ISOASPARTATE O-METHYLTRANSFERASE"/>
    <property type="match status" value="1"/>
</dbReference>
<dbReference type="PANTHER" id="PTHR11579:SF0">
    <property type="entry name" value="PROTEIN-L-ISOASPARTATE(D-ASPARTATE) O-METHYLTRANSFERASE"/>
    <property type="match status" value="1"/>
</dbReference>
<dbReference type="Pfam" id="PF01135">
    <property type="entry name" value="PCMT"/>
    <property type="match status" value="1"/>
</dbReference>
<dbReference type="SUPFAM" id="SSF53335">
    <property type="entry name" value="S-adenosyl-L-methionine-dependent methyltransferases"/>
    <property type="match status" value="1"/>
</dbReference>
<dbReference type="PROSITE" id="PS01279">
    <property type="entry name" value="PCMT"/>
    <property type="match status" value="1"/>
</dbReference>
<keyword id="KW-0963">Cytoplasm</keyword>
<keyword id="KW-0489">Methyltransferase</keyword>
<keyword id="KW-1185">Reference proteome</keyword>
<keyword id="KW-0949">S-adenosyl-L-methionine</keyword>
<keyword id="KW-0808">Transferase</keyword>
<organism>
    <name type="scientific">Chromohalobacter salexigens (strain ATCC BAA-138 / DSM 3043 / CIP 106854 / NCIMB 13768 / 1H11)</name>
    <dbReference type="NCBI Taxonomy" id="290398"/>
    <lineage>
        <taxon>Bacteria</taxon>
        <taxon>Pseudomonadati</taxon>
        <taxon>Pseudomonadota</taxon>
        <taxon>Gammaproteobacteria</taxon>
        <taxon>Oceanospirillales</taxon>
        <taxon>Halomonadaceae</taxon>
        <taxon>Chromohalobacter</taxon>
    </lineage>
</organism>
<protein>
    <recommendedName>
        <fullName evidence="1">Protein-L-isoaspartate O-methyltransferase</fullName>
        <ecNumber evidence="1">2.1.1.77</ecNumber>
    </recommendedName>
    <alternativeName>
        <fullName evidence="1">L-isoaspartyl protein carboxyl methyltransferase</fullName>
    </alternativeName>
    <alternativeName>
        <fullName evidence="1">Protein L-isoaspartyl methyltransferase</fullName>
    </alternativeName>
    <alternativeName>
        <fullName evidence="1">Protein-beta-aspartate methyltransferase</fullName>
        <shortName evidence="1">PIMT</shortName>
    </alternativeName>
</protein>